<reference key="1">
    <citation type="journal article" date="2006" name="J. Bacteriol.">
        <title>Comparative genomic evidence for a close relationship between the dimorphic prosthecate bacteria Hyphomonas neptunium and Caulobacter crescentus.</title>
        <authorList>
            <person name="Badger J.H."/>
            <person name="Hoover T.R."/>
            <person name="Brun Y.V."/>
            <person name="Weiner R.M."/>
            <person name="Laub M.T."/>
            <person name="Alexandre G."/>
            <person name="Mrazek J."/>
            <person name="Ren Q."/>
            <person name="Paulsen I.T."/>
            <person name="Nelson K.E."/>
            <person name="Khouri H.M."/>
            <person name="Radune D."/>
            <person name="Sosa J."/>
            <person name="Dodson R.J."/>
            <person name="Sullivan S.A."/>
            <person name="Rosovitz M.J."/>
            <person name="Madupu R."/>
            <person name="Brinkac L.M."/>
            <person name="Durkin A.S."/>
            <person name="Daugherty S.C."/>
            <person name="Kothari S.P."/>
            <person name="Giglio M.G."/>
            <person name="Zhou L."/>
            <person name="Haft D.H."/>
            <person name="Selengut J.D."/>
            <person name="Davidsen T.M."/>
            <person name="Yang Q."/>
            <person name="Zafar N."/>
            <person name="Ward N.L."/>
        </authorList>
    </citation>
    <scope>NUCLEOTIDE SEQUENCE [LARGE SCALE GENOMIC DNA]</scope>
    <source>
        <strain>ATCC 15444</strain>
    </source>
</reference>
<proteinExistence type="inferred from homology"/>
<gene>
    <name evidence="1" type="primary">ligA</name>
    <name type="ordered locus">HNE_0386</name>
</gene>
<protein>
    <recommendedName>
        <fullName evidence="1">DNA ligase</fullName>
        <ecNumber evidence="1">6.5.1.2</ecNumber>
    </recommendedName>
    <alternativeName>
        <fullName evidence="1">Polydeoxyribonucleotide synthase [NAD(+)]</fullName>
    </alternativeName>
</protein>
<comment type="function">
    <text evidence="1">DNA ligase that catalyzes the formation of phosphodiester linkages between 5'-phosphoryl and 3'-hydroxyl groups in double-stranded DNA using NAD as a coenzyme and as the energy source for the reaction. It is essential for DNA replication and repair of damaged DNA.</text>
</comment>
<comment type="catalytic activity">
    <reaction evidence="1">
        <text>NAD(+) + (deoxyribonucleotide)n-3'-hydroxyl + 5'-phospho-(deoxyribonucleotide)m = (deoxyribonucleotide)n+m + AMP + beta-nicotinamide D-nucleotide.</text>
        <dbReference type="EC" id="6.5.1.2"/>
    </reaction>
</comment>
<comment type="cofactor">
    <cofactor evidence="1">
        <name>Mg(2+)</name>
        <dbReference type="ChEBI" id="CHEBI:18420"/>
    </cofactor>
    <cofactor evidence="1">
        <name>Mn(2+)</name>
        <dbReference type="ChEBI" id="CHEBI:29035"/>
    </cofactor>
</comment>
<comment type="similarity">
    <text evidence="1">Belongs to the NAD-dependent DNA ligase family. LigA subfamily.</text>
</comment>
<evidence type="ECO:0000255" key="1">
    <source>
        <dbReference type="HAMAP-Rule" id="MF_01588"/>
    </source>
</evidence>
<sequence>MSGDKPVEALSEAEAAAELERLARAIADADAAYYQNDAPELTDADYDALRQRNLAIEARFPALKREDSPTDRVGAEAGDGFAKARHSAPMLSLDNAFTDEDVADFAVRIRRFLGLAPEETLAFTAEPKIDGLSLSLTYENGKLMRAATRGDGQTGEDVTANARTLGDIPVKLKGKGWPERIEVRGEVYMAKSAFADLNAREAEAGRKVFANPRNAAAGSLRQLDVEITKSRPLRFFAYAWAAASEPFAQTQFEAVKAFADWGFVTNSRMIRIKTVEEVLSYYQEIEAERASLEYDIDGVVYKVDRLDWQQRLGFVSRAPRWAIAHKFPAEKAVTTLLGIDIQVGRTGSLTPVARLEPVTVGGVVVSNATLHNEDEIARLGVKPGDKVEIQRAGDVIPQVLRVVEPGQGAPWAMPDTCPVCGSAAVREIDDAGRADVRRRCTGGLICPAQAVERLKHFVSRKALDIDGLGEKQVLLFHEKGAVKAPQDIFRLKKNIEAAGLPPLEEWEGFGAQSARKLYSAIDARRKVPFARFLNGLGIRYVGQTTSAQFARSFLSWQSFWAAVKAAEEGGIESEAYNELIGIDGIGQAAARSLMAFEGEPHNREMLAALLEEVEVEDEIPAETGSPVTGKTVVFTGTLEKMTRDEAKARASALGAKVAGTVSAKTDIVIAGPGAGSKLVKAEQLGLAVMTEDEWLALIGET</sequence>
<keyword id="KW-0227">DNA damage</keyword>
<keyword id="KW-0234">DNA repair</keyword>
<keyword id="KW-0235">DNA replication</keyword>
<keyword id="KW-0436">Ligase</keyword>
<keyword id="KW-0460">Magnesium</keyword>
<keyword id="KW-0464">Manganese</keyword>
<keyword id="KW-0479">Metal-binding</keyword>
<keyword id="KW-0520">NAD</keyword>
<keyword id="KW-1185">Reference proteome</keyword>
<keyword id="KW-0862">Zinc</keyword>
<name>DNLJ_HYPNA</name>
<feature type="chain" id="PRO_0000313266" description="DNA ligase">
    <location>
        <begin position="1"/>
        <end position="701"/>
    </location>
</feature>
<feature type="domain" description="BRCT" evidence="1">
    <location>
        <begin position="622"/>
        <end position="701"/>
    </location>
</feature>
<feature type="active site" description="N6-AMP-lysine intermediate" evidence="1">
    <location>
        <position position="128"/>
    </location>
</feature>
<feature type="binding site" evidence="1">
    <location>
        <begin position="43"/>
        <end position="47"/>
    </location>
    <ligand>
        <name>NAD(+)</name>
        <dbReference type="ChEBI" id="CHEBI:57540"/>
    </ligand>
</feature>
<feature type="binding site" evidence="1">
    <location>
        <begin position="92"/>
        <end position="93"/>
    </location>
    <ligand>
        <name>NAD(+)</name>
        <dbReference type="ChEBI" id="CHEBI:57540"/>
    </ligand>
</feature>
<feature type="binding site" evidence="1">
    <location>
        <position position="126"/>
    </location>
    <ligand>
        <name>NAD(+)</name>
        <dbReference type="ChEBI" id="CHEBI:57540"/>
    </ligand>
</feature>
<feature type="binding site" evidence="1">
    <location>
        <position position="149"/>
    </location>
    <ligand>
        <name>NAD(+)</name>
        <dbReference type="ChEBI" id="CHEBI:57540"/>
    </ligand>
</feature>
<feature type="binding site" evidence="1">
    <location>
        <position position="186"/>
    </location>
    <ligand>
        <name>NAD(+)</name>
        <dbReference type="ChEBI" id="CHEBI:57540"/>
    </ligand>
</feature>
<feature type="binding site" evidence="1">
    <location>
        <position position="302"/>
    </location>
    <ligand>
        <name>NAD(+)</name>
        <dbReference type="ChEBI" id="CHEBI:57540"/>
    </ligand>
</feature>
<feature type="binding site" evidence="1">
    <location>
        <position position="326"/>
    </location>
    <ligand>
        <name>NAD(+)</name>
        <dbReference type="ChEBI" id="CHEBI:57540"/>
    </ligand>
</feature>
<feature type="binding site" evidence="1">
    <location>
        <position position="417"/>
    </location>
    <ligand>
        <name>Zn(2+)</name>
        <dbReference type="ChEBI" id="CHEBI:29105"/>
    </ligand>
</feature>
<feature type="binding site" evidence="1">
    <location>
        <position position="420"/>
    </location>
    <ligand>
        <name>Zn(2+)</name>
        <dbReference type="ChEBI" id="CHEBI:29105"/>
    </ligand>
</feature>
<feature type="binding site" evidence="1">
    <location>
        <position position="440"/>
    </location>
    <ligand>
        <name>Zn(2+)</name>
        <dbReference type="ChEBI" id="CHEBI:29105"/>
    </ligand>
</feature>
<feature type="binding site" evidence="1">
    <location>
        <position position="446"/>
    </location>
    <ligand>
        <name>Zn(2+)</name>
        <dbReference type="ChEBI" id="CHEBI:29105"/>
    </ligand>
</feature>
<organism>
    <name type="scientific">Hyphomonas neptunium (strain ATCC 15444)</name>
    <dbReference type="NCBI Taxonomy" id="228405"/>
    <lineage>
        <taxon>Bacteria</taxon>
        <taxon>Pseudomonadati</taxon>
        <taxon>Pseudomonadota</taxon>
        <taxon>Alphaproteobacteria</taxon>
        <taxon>Hyphomonadales</taxon>
        <taxon>Hyphomonadaceae</taxon>
        <taxon>Hyphomonas</taxon>
    </lineage>
</organism>
<accession>Q0C577</accession>
<dbReference type="EC" id="6.5.1.2" evidence="1"/>
<dbReference type="EMBL" id="CP000158">
    <property type="protein sequence ID" value="ABI76222.1"/>
    <property type="molecule type" value="Genomic_DNA"/>
</dbReference>
<dbReference type="RefSeq" id="WP_011645416.1">
    <property type="nucleotide sequence ID" value="NC_008358.1"/>
</dbReference>
<dbReference type="SMR" id="Q0C577"/>
<dbReference type="STRING" id="228405.HNE_0386"/>
<dbReference type="KEGG" id="hne:HNE_0386"/>
<dbReference type="eggNOG" id="COG0272">
    <property type="taxonomic scope" value="Bacteria"/>
</dbReference>
<dbReference type="HOGENOM" id="CLU_007764_2_0_5"/>
<dbReference type="Proteomes" id="UP000001959">
    <property type="component" value="Chromosome"/>
</dbReference>
<dbReference type="GO" id="GO:0005829">
    <property type="term" value="C:cytosol"/>
    <property type="evidence" value="ECO:0007669"/>
    <property type="project" value="TreeGrafter"/>
</dbReference>
<dbReference type="GO" id="GO:0003677">
    <property type="term" value="F:DNA binding"/>
    <property type="evidence" value="ECO:0007669"/>
    <property type="project" value="InterPro"/>
</dbReference>
<dbReference type="GO" id="GO:0003911">
    <property type="term" value="F:DNA ligase (NAD+) activity"/>
    <property type="evidence" value="ECO:0007669"/>
    <property type="project" value="UniProtKB-UniRule"/>
</dbReference>
<dbReference type="GO" id="GO:0046872">
    <property type="term" value="F:metal ion binding"/>
    <property type="evidence" value="ECO:0007669"/>
    <property type="project" value="UniProtKB-KW"/>
</dbReference>
<dbReference type="GO" id="GO:0006281">
    <property type="term" value="P:DNA repair"/>
    <property type="evidence" value="ECO:0007669"/>
    <property type="project" value="UniProtKB-KW"/>
</dbReference>
<dbReference type="GO" id="GO:0006260">
    <property type="term" value="P:DNA replication"/>
    <property type="evidence" value="ECO:0007669"/>
    <property type="project" value="UniProtKB-KW"/>
</dbReference>
<dbReference type="CDD" id="cd17748">
    <property type="entry name" value="BRCT_DNA_ligase_like"/>
    <property type="match status" value="1"/>
</dbReference>
<dbReference type="CDD" id="cd00114">
    <property type="entry name" value="LIGANc"/>
    <property type="match status" value="1"/>
</dbReference>
<dbReference type="FunFam" id="2.40.50.140:FF:000012">
    <property type="entry name" value="DNA ligase"/>
    <property type="match status" value="1"/>
</dbReference>
<dbReference type="FunFam" id="3.30.470.30:FF:000001">
    <property type="entry name" value="DNA ligase"/>
    <property type="match status" value="1"/>
</dbReference>
<dbReference type="Gene3D" id="6.20.10.30">
    <property type="match status" value="1"/>
</dbReference>
<dbReference type="Gene3D" id="1.10.150.20">
    <property type="entry name" value="5' to 3' exonuclease, C-terminal subdomain"/>
    <property type="match status" value="2"/>
</dbReference>
<dbReference type="Gene3D" id="3.40.50.10190">
    <property type="entry name" value="BRCT domain"/>
    <property type="match status" value="1"/>
</dbReference>
<dbReference type="Gene3D" id="3.30.470.30">
    <property type="entry name" value="DNA ligase/mRNA capping enzyme"/>
    <property type="match status" value="1"/>
</dbReference>
<dbReference type="Gene3D" id="1.10.287.610">
    <property type="entry name" value="Helix hairpin bin"/>
    <property type="match status" value="1"/>
</dbReference>
<dbReference type="Gene3D" id="2.40.50.140">
    <property type="entry name" value="Nucleic acid-binding proteins"/>
    <property type="match status" value="1"/>
</dbReference>
<dbReference type="HAMAP" id="MF_01588">
    <property type="entry name" value="DNA_ligase_A"/>
    <property type="match status" value="1"/>
</dbReference>
<dbReference type="InterPro" id="IPR001357">
    <property type="entry name" value="BRCT_dom"/>
</dbReference>
<dbReference type="InterPro" id="IPR036420">
    <property type="entry name" value="BRCT_dom_sf"/>
</dbReference>
<dbReference type="InterPro" id="IPR041663">
    <property type="entry name" value="DisA/LigA_HHH"/>
</dbReference>
<dbReference type="InterPro" id="IPR001679">
    <property type="entry name" value="DNA_ligase"/>
</dbReference>
<dbReference type="InterPro" id="IPR018239">
    <property type="entry name" value="DNA_ligase_AS"/>
</dbReference>
<dbReference type="InterPro" id="IPR033136">
    <property type="entry name" value="DNA_ligase_CS"/>
</dbReference>
<dbReference type="InterPro" id="IPR013839">
    <property type="entry name" value="DNAligase_adenylation"/>
</dbReference>
<dbReference type="InterPro" id="IPR013840">
    <property type="entry name" value="DNAligase_N"/>
</dbReference>
<dbReference type="InterPro" id="IPR003583">
    <property type="entry name" value="Hlx-hairpin-Hlx_DNA-bd_motif"/>
</dbReference>
<dbReference type="InterPro" id="IPR012340">
    <property type="entry name" value="NA-bd_OB-fold"/>
</dbReference>
<dbReference type="InterPro" id="IPR004150">
    <property type="entry name" value="NAD_DNA_ligase_OB"/>
</dbReference>
<dbReference type="InterPro" id="IPR010994">
    <property type="entry name" value="RuvA_2-like"/>
</dbReference>
<dbReference type="InterPro" id="IPR004149">
    <property type="entry name" value="Znf_DNAligase_C4"/>
</dbReference>
<dbReference type="NCBIfam" id="TIGR00575">
    <property type="entry name" value="dnlj"/>
    <property type="match status" value="1"/>
</dbReference>
<dbReference type="NCBIfam" id="NF005932">
    <property type="entry name" value="PRK07956.1"/>
    <property type="match status" value="1"/>
</dbReference>
<dbReference type="PANTHER" id="PTHR23389">
    <property type="entry name" value="CHROMOSOME TRANSMISSION FIDELITY FACTOR 18"/>
    <property type="match status" value="1"/>
</dbReference>
<dbReference type="PANTHER" id="PTHR23389:SF9">
    <property type="entry name" value="DNA LIGASE"/>
    <property type="match status" value="1"/>
</dbReference>
<dbReference type="Pfam" id="PF00533">
    <property type="entry name" value="BRCT"/>
    <property type="match status" value="1"/>
</dbReference>
<dbReference type="Pfam" id="PF01653">
    <property type="entry name" value="DNA_ligase_aden"/>
    <property type="match status" value="1"/>
</dbReference>
<dbReference type="Pfam" id="PF03120">
    <property type="entry name" value="DNA_ligase_OB"/>
    <property type="match status" value="1"/>
</dbReference>
<dbReference type="Pfam" id="PF03119">
    <property type="entry name" value="DNA_ligase_ZBD"/>
    <property type="match status" value="1"/>
</dbReference>
<dbReference type="Pfam" id="PF12826">
    <property type="entry name" value="HHH_2"/>
    <property type="match status" value="1"/>
</dbReference>
<dbReference type="PIRSF" id="PIRSF001604">
    <property type="entry name" value="LigA"/>
    <property type="match status" value="1"/>
</dbReference>
<dbReference type="SMART" id="SM00292">
    <property type="entry name" value="BRCT"/>
    <property type="match status" value="1"/>
</dbReference>
<dbReference type="SMART" id="SM00278">
    <property type="entry name" value="HhH1"/>
    <property type="match status" value="3"/>
</dbReference>
<dbReference type="SMART" id="SM00532">
    <property type="entry name" value="LIGANc"/>
    <property type="match status" value="1"/>
</dbReference>
<dbReference type="SUPFAM" id="SSF52113">
    <property type="entry name" value="BRCT domain"/>
    <property type="match status" value="1"/>
</dbReference>
<dbReference type="SUPFAM" id="SSF56091">
    <property type="entry name" value="DNA ligase/mRNA capping enzyme, catalytic domain"/>
    <property type="match status" value="1"/>
</dbReference>
<dbReference type="SUPFAM" id="SSF50249">
    <property type="entry name" value="Nucleic acid-binding proteins"/>
    <property type="match status" value="1"/>
</dbReference>
<dbReference type="SUPFAM" id="SSF47781">
    <property type="entry name" value="RuvA domain 2-like"/>
    <property type="match status" value="1"/>
</dbReference>
<dbReference type="PROSITE" id="PS50172">
    <property type="entry name" value="BRCT"/>
    <property type="match status" value="1"/>
</dbReference>
<dbReference type="PROSITE" id="PS01055">
    <property type="entry name" value="DNA_LIGASE_N1"/>
    <property type="match status" value="1"/>
</dbReference>
<dbReference type="PROSITE" id="PS01056">
    <property type="entry name" value="DNA_LIGASE_N2"/>
    <property type="match status" value="1"/>
</dbReference>